<gene>
    <name evidence="1" type="primary">hemF</name>
    <name type="ordered locus">YPO3032</name>
    <name type="ordered locus">y1451</name>
    <name type="ordered locus">YP_2655</name>
</gene>
<reference key="1">
    <citation type="journal article" date="2001" name="Nature">
        <title>Genome sequence of Yersinia pestis, the causative agent of plague.</title>
        <authorList>
            <person name="Parkhill J."/>
            <person name="Wren B.W."/>
            <person name="Thomson N.R."/>
            <person name="Titball R.W."/>
            <person name="Holden M.T.G."/>
            <person name="Prentice M.B."/>
            <person name="Sebaihia M."/>
            <person name="James K.D."/>
            <person name="Churcher C.M."/>
            <person name="Mungall K.L."/>
            <person name="Baker S."/>
            <person name="Basham D."/>
            <person name="Bentley S.D."/>
            <person name="Brooks K."/>
            <person name="Cerdeno-Tarraga A.-M."/>
            <person name="Chillingworth T."/>
            <person name="Cronin A."/>
            <person name="Davies R.M."/>
            <person name="Davis P."/>
            <person name="Dougan G."/>
            <person name="Feltwell T."/>
            <person name="Hamlin N."/>
            <person name="Holroyd S."/>
            <person name="Jagels K."/>
            <person name="Karlyshev A.V."/>
            <person name="Leather S."/>
            <person name="Moule S."/>
            <person name="Oyston P.C.F."/>
            <person name="Quail M.A."/>
            <person name="Rutherford K.M."/>
            <person name="Simmonds M."/>
            <person name="Skelton J."/>
            <person name="Stevens K."/>
            <person name="Whitehead S."/>
            <person name="Barrell B.G."/>
        </authorList>
    </citation>
    <scope>NUCLEOTIDE SEQUENCE [LARGE SCALE GENOMIC DNA]</scope>
    <source>
        <strain>CO-92 / Biovar Orientalis</strain>
    </source>
</reference>
<reference key="2">
    <citation type="journal article" date="2002" name="J. Bacteriol.">
        <title>Genome sequence of Yersinia pestis KIM.</title>
        <authorList>
            <person name="Deng W."/>
            <person name="Burland V."/>
            <person name="Plunkett G. III"/>
            <person name="Boutin A."/>
            <person name="Mayhew G.F."/>
            <person name="Liss P."/>
            <person name="Perna N.T."/>
            <person name="Rose D.J."/>
            <person name="Mau B."/>
            <person name="Zhou S."/>
            <person name="Schwartz D.C."/>
            <person name="Fetherston J.D."/>
            <person name="Lindler L.E."/>
            <person name="Brubaker R.R."/>
            <person name="Plano G.V."/>
            <person name="Straley S.C."/>
            <person name="McDonough K.A."/>
            <person name="Nilles M.L."/>
            <person name="Matson J.S."/>
            <person name="Blattner F.R."/>
            <person name="Perry R.D."/>
        </authorList>
    </citation>
    <scope>NUCLEOTIDE SEQUENCE [LARGE SCALE GENOMIC DNA]</scope>
    <source>
        <strain>KIM10+ / Biovar Mediaevalis</strain>
    </source>
</reference>
<reference key="3">
    <citation type="journal article" date="2004" name="DNA Res.">
        <title>Complete genome sequence of Yersinia pestis strain 91001, an isolate avirulent to humans.</title>
        <authorList>
            <person name="Song Y."/>
            <person name="Tong Z."/>
            <person name="Wang J."/>
            <person name="Wang L."/>
            <person name="Guo Z."/>
            <person name="Han Y."/>
            <person name="Zhang J."/>
            <person name="Pei D."/>
            <person name="Zhou D."/>
            <person name="Qin H."/>
            <person name="Pang X."/>
            <person name="Han Y."/>
            <person name="Zhai J."/>
            <person name="Li M."/>
            <person name="Cui B."/>
            <person name="Qi Z."/>
            <person name="Jin L."/>
            <person name="Dai R."/>
            <person name="Chen F."/>
            <person name="Li S."/>
            <person name="Ye C."/>
            <person name="Du Z."/>
            <person name="Lin W."/>
            <person name="Wang J."/>
            <person name="Yu J."/>
            <person name="Yang H."/>
            <person name="Wang J."/>
            <person name="Huang P."/>
            <person name="Yang R."/>
        </authorList>
    </citation>
    <scope>NUCLEOTIDE SEQUENCE [LARGE SCALE GENOMIC DNA]</scope>
    <source>
        <strain>91001 / Biovar Mediaevalis</strain>
    </source>
</reference>
<keyword id="KW-0963">Cytoplasm</keyword>
<keyword id="KW-0350">Heme biosynthesis</keyword>
<keyword id="KW-0479">Metal-binding</keyword>
<keyword id="KW-0560">Oxidoreductase</keyword>
<keyword id="KW-0627">Porphyrin biosynthesis</keyword>
<keyword id="KW-1185">Reference proteome</keyword>
<comment type="function">
    <text evidence="1">Involved in the heme biosynthesis. Catalyzes the aerobic oxidative decarboxylation of propionate groups of rings A and B of coproporphyrinogen-III to yield the vinyl groups in protoporphyrinogen-IX.</text>
</comment>
<comment type="catalytic activity">
    <reaction evidence="1">
        <text>coproporphyrinogen III + O2 + 2 H(+) = protoporphyrinogen IX + 2 CO2 + 2 H2O</text>
        <dbReference type="Rhea" id="RHEA:18257"/>
        <dbReference type="ChEBI" id="CHEBI:15377"/>
        <dbReference type="ChEBI" id="CHEBI:15378"/>
        <dbReference type="ChEBI" id="CHEBI:15379"/>
        <dbReference type="ChEBI" id="CHEBI:16526"/>
        <dbReference type="ChEBI" id="CHEBI:57307"/>
        <dbReference type="ChEBI" id="CHEBI:57309"/>
        <dbReference type="EC" id="1.3.3.3"/>
    </reaction>
</comment>
<comment type="cofactor">
    <cofactor evidence="1">
        <name>a divalent metal cation</name>
        <dbReference type="ChEBI" id="CHEBI:60240"/>
    </cofactor>
</comment>
<comment type="pathway">
    <text evidence="1">Porphyrin-containing compound metabolism; protoporphyrin-IX biosynthesis; protoporphyrinogen-IX from coproporphyrinogen-III (O2 route): step 1/1.</text>
</comment>
<comment type="subunit">
    <text evidence="1">Homodimer.</text>
</comment>
<comment type="subcellular location">
    <subcellularLocation>
        <location evidence="1">Cytoplasm</location>
    </subcellularLocation>
</comment>
<comment type="similarity">
    <text evidence="1">Belongs to the aerobic coproporphyrinogen-III oxidase family.</text>
</comment>
<accession>Q8ZCF9</accession>
<accession>Q0WCN6</accession>
<name>HEM6_YERPE</name>
<evidence type="ECO:0000255" key="1">
    <source>
        <dbReference type="HAMAP-Rule" id="MF_00333"/>
    </source>
</evidence>
<proteinExistence type="inferred from homology"/>
<dbReference type="EC" id="1.3.3.3" evidence="1"/>
<dbReference type="EMBL" id="AL590842">
    <property type="protein sequence ID" value="CAL21634.1"/>
    <property type="molecule type" value="Genomic_DNA"/>
</dbReference>
<dbReference type="EMBL" id="AE009952">
    <property type="protein sequence ID" value="AAM85022.1"/>
    <property type="molecule type" value="Genomic_DNA"/>
</dbReference>
<dbReference type="EMBL" id="AE017042">
    <property type="protein sequence ID" value="AAS62847.1"/>
    <property type="molecule type" value="Genomic_DNA"/>
</dbReference>
<dbReference type="PIR" id="AG0368">
    <property type="entry name" value="AG0368"/>
</dbReference>
<dbReference type="RefSeq" id="WP_002208526.1">
    <property type="nucleotide sequence ID" value="NZ_WUCM01000010.1"/>
</dbReference>
<dbReference type="RefSeq" id="YP_002347952.1">
    <property type="nucleotide sequence ID" value="NC_003143.1"/>
</dbReference>
<dbReference type="SMR" id="Q8ZCF9"/>
<dbReference type="STRING" id="214092.YPO3032"/>
<dbReference type="PaxDb" id="214092-YPO3032"/>
<dbReference type="DNASU" id="1146398"/>
<dbReference type="EnsemblBacteria" id="AAS62847">
    <property type="protein sequence ID" value="AAS62847"/>
    <property type="gene ID" value="YP_2655"/>
</dbReference>
<dbReference type="GeneID" id="57975670"/>
<dbReference type="KEGG" id="ype:YPO3032"/>
<dbReference type="KEGG" id="ypk:y1451"/>
<dbReference type="KEGG" id="ypm:YP_2655"/>
<dbReference type="PATRIC" id="fig|214092.21.peg.3485"/>
<dbReference type="eggNOG" id="COG0408">
    <property type="taxonomic scope" value="Bacteria"/>
</dbReference>
<dbReference type="HOGENOM" id="CLU_026169_0_1_6"/>
<dbReference type="OMA" id="VHANWRY"/>
<dbReference type="OrthoDB" id="9777553at2"/>
<dbReference type="UniPathway" id="UPA00251">
    <property type="reaction ID" value="UER00322"/>
</dbReference>
<dbReference type="Proteomes" id="UP000000815">
    <property type="component" value="Chromosome"/>
</dbReference>
<dbReference type="Proteomes" id="UP000001019">
    <property type="component" value="Chromosome"/>
</dbReference>
<dbReference type="Proteomes" id="UP000002490">
    <property type="component" value="Chromosome"/>
</dbReference>
<dbReference type="GO" id="GO:0005737">
    <property type="term" value="C:cytoplasm"/>
    <property type="evidence" value="ECO:0000318"/>
    <property type="project" value="GO_Central"/>
</dbReference>
<dbReference type="GO" id="GO:0004109">
    <property type="term" value="F:coproporphyrinogen oxidase activity"/>
    <property type="evidence" value="ECO:0000318"/>
    <property type="project" value="GO_Central"/>
</dbReference>
<dbReference type="GO" id="GO:0046872">
    <property type="term" value="F:metal ion binding"/>
    <property type="evidence" value="ECO:0007669"/>
    <property type="project" value="UniProtKB-KW"/>
</dbReference>
<dbReference type="GO" id="GO:0042803">
    <property type="term" value="F:protein homodimerization activity"/>
    <property type="evidence" value="ECO:0000250"/>
    <property type="project" value="UniProtKB"/>
</dbReference>
<dbReference type="GO" id="GO:0006782">
    <property type="term" value="P:protoporphyrinogen IX biosynthetic process"/>
    <property type="evidence" value="ECO:0000318"/>
    <property type="project" value="GO_Central"/>
</dbReference>
<dbReference type="FunFam" id="3.40.1500.10:FF:000001">
    <property type="entry name" value="Oxygen-dependent coproporphyrinogen-III oxidase"/>
    <property type="match status" value="1"/>
</dbReference>
<dbReference type="Gene3D" id="3.40.1500.10">
    <property type="entry name" value="Coproporphyrinogen III oxidase, aerobic"/>
    <property type="match status" value="1"/>
</dbReference>
<dbReference type="HAMAP" id="MF_00333">
    <property type="entry name" value="Coprogen_oxidas"/>
    <property type="match status" value="1"/>
</dbReference>
<dbReference type="InterPro" id="IPR001260">
    <property type="entry name" value="Coprogen_oxidase_aer"/>
</dbReference>
<dbReference type="InterPro" id="IPR036406">
    <property type="entry name" value="Coprogen_oxidase_aer_sf"/>
</dbReference>
<dbReference type="InterPro" id="IPR018375">
    <property type="entry name" value="Coprogen_oxidase_CS"/>
</dbReference>
<dbReference type="NCBIfam" id="NF003727">
    <property type="entry name" value="PRK05330.1"/>
    <property type="match status" value="1"/>
</dbReference>
<dbReference type="PANTHER" id="PTHR10755">
    <property type="entry name" value="COPROPORPHYRINOGEN III OXIDASE, MITOCHONDRIAL"/>
    <property type="match status" value="1"/>
</dbReference>
<dbReference type="PANTHER" id="PTHR10755:SF0">
    <property type="entry name" value="OXYGEN-DEPENDENT COPROPORPHYRINOGEN-III OXIDASE, MITOCHONDRIAL"/>
    <property type="match status" value="1"/>
</dbReference>
<dbReference type="Pfam" id="PF01218">
    <property type="entry name" value="Coprogen_oxidas"/>
    <property type="match status" value="1"/>
</dbReference>
<dbReference type="PIRSF" id="PIRSF000166">
    <property type="entry name" value="Coproporphyri_ox"/>
    <property type="match status" value="1"/>
</dbReference>
<dbReference type="PRINTS" id="PR00073">
    <property type="entry name" value="COPRGNOXDASE"/>
</dbReference>
<dbReference type="SUPFAM" id="SSF102886">
    <property type="entry name" value="Coproporphyrinogen III oxidase"/>
    <property type="match status" value="1"/>
</dbReference>
<dbReference type="PROSITE" id="PS01021">
    <property type="entry name" value="COPROGEN_OXIDASE"/>
    <property type="match status" value="1"/>
</dbReference>
<sequence length="309" mass="35005">MNSPDIALIKTYLLTLQDNICAALAQADGHAEFTEECWVREEGGGGRSRVLVNGAVFEQAGVNFSHVSGAMLPASATAHRPELAGRSFQALGVSLVIHPLNPYLPTSHANVRFFIAEKPGEDAVWWFGGGFDLTPYYGFEEDAIHWHQVAHSLCQPFGEQIYPRYKKWCDDYFYIKHRQEARGIGGLFFDDLNSPDFMTCFNFTQAVGDGFLAAYMPIVARRKALGWGDRERQFQLYRRGRYVEFNLVWDRGTLFGLQTGGRTESILMSLPPLVRWEYNYQPEADSAEAALYRDFLPVKDWLAIKGETH</sequence>
<feature type="chain" id="PRO_0000109935" description="Oxygen-dependent coproporphyrinogen-III oxidase">
    <location>
        <begin position="1"/>
        <end position="309"/>
    </location>
</feature>
<feature type="region of interest" description="Important for dimerization" evidence="1">
    <location>
        <begin position="242"/>
        <end position="277"/>
    </location>
</feature>
<feature type="active site" description="Proton donor" evidence="1">
    <location>
        <position position="108"/>
    </location>
</feature>
<feature type="binding site" evidence="1">
    <location>
        <position position="94"/>
    </location>
    <ligand>
        <name>substrate</name>
    </ligand>
</feature>
<feature type="binding site" evidence="1">
    <location>
        <position position="98"/>
    </location>
    <ligand>
        <name>a divalent metal cation</name>
        <dbReference type="ChEBI" id="CHEBI:60240"/>
    </ligand>
</feature>
<feature type="binding site" evidence="1">
    <location>
        <position position="108"/>
    </location>
    <ligand>
        <name>a divalent metal cation</name>
        <dbReference type="ChEBI" id="CHEBI:60240"/>
    </ligand>
</feature>
<feature type="binding site" evidence="1">
    <location>
        <begin position="110"/>
        <end position="112"/>
    </location>
    <ligand>
        <name>substrate</name>
    </ligand>
</feature>
<feature type="binding site" evidence="1">
    <location>
        <position position="147"/>
    </location>
    <ligand>
        <name>a divalent metal cation</name>
        <dbReference type="ChEBI" id="CHEBI:60240"/>
    </ligand>
</feature>
<feature type="binding site" evidence="1">
    <location>
        <position position="177"/>
    </location>
    <ligand>
        <name>a divalent metal cation</name>
        <dbReference type="ChEBI" id="CHEBI:60240"/>
    </ligand>
</feature>
<feature type="binding site" evidence="1">
    <location>
        <begin position="260"/>
        <end position="262"/>
    </location>
    <ligand>
        <name>substrate</name>
    </ligand>
</feature>
<feature type="site" description="Important for dimerization" evidence="1">
    <location>
        <position position="177"/>
    </location>
</feature>
<protein>
    <recommendedName>
        <fullName evidence="1">Oxygen-dependent coproporphyrinogen-III oxidase</fullName>
        <shortName evidence="1">CPO</shortName>
        <shortName evidence="1">Coprogen oxidase</shortName>
        <shortName evidence="1">Coproporphyrinogenase</shortName>
        <ecNumber evidence="1">1.3.3.3</ecNumber>
    </recommendedName>
</protein>
<organism>
    <name type="scientific">Yersinia pestis</name>
    <dbReference type="NCBI Taxonomy" id="632"/>
    <lineage>
        <taxon>Bacteria</taxon>
        <taxon>Pseudomonadati</taxon>
        <taxon>Pseudomonadota</taxon>
        <taxon>Gammaproteobacteria</taxon>
        <taxon>Enterobacterales</taxon>
        <taxon>Yersiniaceae</taxon>
        <taxon>Yersinia</taxon>
    </lineage>
</organism>